<organism>
    <name type="scientific">Haemophilus ducreyi (strain 35000HP / ATCC 700724)</name>
    <dbReference type="NCBI Taxonomy" id="233412"/>
    <lineage>
        <taxon>Bacteria</taxon>
        <taxon>Pseudomonadati</taxon>
        <taxon>Pseudomonadota</taxon>
        <taxon>Gammaproteobacteria</taxon>
        <taxon>Pasteurellales</taxon>
        <taxon>Pasteurellaceae</taxon>
        <taxon>Haemophilus</taxon>
    </lineage>
</organism>
<sequence>MARYLGPKLKLSRREGTDLFLKSGVRAIESKCRNRLDVAPGQHGARKPRLSDYGSQLREKQKVRRIYGILERQFRNYYTEANRLKGNTGENLLVLLEGRLDNVVYRMGFAATRAEARQLVSHKSIVVNGRVVNIPSYQVSVDDVVTVREKSKKQARIKASLELASQREKPTWLEVDAVKMEGVFKRTPERSDLSADINEHLIVELYSK</sequence>
<reference key="1">
    <citation type="submission" date="2003-06" db="EMBL/GenBank/DDBJ databases">
        <title>The complete genome sequence of Haemophilus ducreyi.</title>
        <authorList>
            <person name="Munson R.S. Jr."/>
            <person name="Ray W.C."/>
            <person name="Mahairas G."/>
            <person name="Sabo P."/>
            <person name="Mungur R."/>
            <person name="Johnson L."/>
            <person name="Nguyen D."/>
            <person name="Wang J."/>
            <person name="Forst C."/>
            <person name="Hood L."/>
        </authorList>
    </citation>
    <scope>NUCLEOTIDE SEQUENCE [LARGE SCALE GENOMIC DNA]</scope>
    <source>
        <strain>35000HP / ATCC 700724</strain>
    </source>
</reference>
<name>RS4_HAEDU</name>
<protein>
    <recommendedName>
        <fullName evidence="1">Small ribosomal subunit protein uS4</fullName>
    </recommendedName>
    <alternativeName>
        <fullName evidence="2">30S ribosomal protein S4</fullName>
    </alternativeName>
</protein>
<proteinExistence type="inferred from homology"/>
<keyword id="KW-1185">Reference proteome</keyword>
<keyword id="KW-0687">Ribonucleoprotein</keyword>
<keyword id="KW-0689">Ribosomal protein</keyword>
<keyword id="KW-0694">RNA-binding</keyword>
<keyword id="KW-0699">rRNA-binding</keyword>
<evidence type="ECO:0000255" key="1">
    <source>
        <dbReference type="HAMAP-Rule" id="MF_01306"/>
    </source>
</evidence>
<evidence type="ECO:0000305" key="2"/>
<dbReference type="EMBL" id="AE017143">
    <property type="protein sequence ID" value="AAP96672.1"/>
    <property type="molecule type" value="Genomic_DNA"/>
</dbReference>
<dbReference type="RefSeq" id="WP_010945699.1">
    <property type="nucleotide sequence ID" value="NC_002940.2"/>
</dbReference>
<dbReference type="SMR" id="Q7VKF7"/>
<dbReference type="STRING" id="233412.HD_1952"/>
<dbReference type="GeneID" id="60733567"/>
<dbReference type="KEGG" id="hdu:HD_1952"/>
<dbReference type="eggNOG" id="COG0522">
    <property type="taxonomic scope" value="Bacteria"/>
</dbReference>
<dbReference type="HOGENOM" id="CLU_092403_0_2_6"/>
<dbReference type="OrthoDB" id="9803672at2"/>
<dbReference type="Proteomes" id="UP000001022">
    <property type="component" value="Chromosome"/>
</dbReference>
<dbReference type="GO" id="GO:0015935">
    <property type="term" value="C:small ribosomal subunit"/>
    <property type="evidence" value="ECO:0007669"/>
    <property type="project" value="InterPro"/>
</dbReference>
<dbReference type="GO" id="GO:0019843">
    <property type="term" value="F:rRNA binding"/>
    <property type="evidence" value="ECO:0007669"/>
    <property type="project" value="UniProtKB-UniRule"/>
</dbReference>
<dbReference type="GO" id="GO:0003735">
    <property type="term" value="F:structural constituent of ribosome"/>
    <property type="evidence" value="ECO:0007669"/>
    <property type="project" value="InterPro"/>
</dbReference>
<dbReference type="GO" id="GO:0042274">
    <property type="term" value="P:ribosomal small subunit biogenesis"/>
    <property type="evidence" value="ECO:0007669"/>
    <property type="project" value="TreeGrafter"/>
</dbReference>
<dbReference type="GO" id="GO:0006412">
    <property type="term" value="P:translation"/>
    <property type="evidence" value="ECO:0007669"/>
    <property type="project" value="UniProtKB-UniRule"/>
</dbReference>
<dbReference type="CDD" id="cd00165">
    <property type="entry name" value="S4"/>
    <property type="match status" value="1"/>
</dbReference>
<dbReference type="FunFam" id="1.10.1050.10:FF:000001">
    <property type="entry name" value="30S ribosomal protein S4"/>
    <property type="match status" value="1"/>
</dbReference>
<dbReference type="FunFam" id="3.10.290.10:FF:000001">
    <property type="entry name" value="30S ribosomal protein S4"/>
    <property type="match status" value="1"/>
</dbReference>
<dbReference type="Gene3D" id="1.10.1050.10">
    <property type="entry name" value="Ribosomal Protein S4 Delta 41, Chain A, domain 1"/>
    <property type="match status" value="1"/>
</dbReference>
<dbReference type="Gene3D" id="3.10.290.10">
    <property type="entry name" value="RNA-binding S4 domain"/>
    <property type="match status" value="1"/>
</dbReference>
<dbReference type="HAMAP" id="MF_01306_B">
    <property type="entry name" value="Ribosomal_uS4_B"/>
    <property type="match status" value="1"/>
</dbReference>
<dbReference type="InterPro" id="IPR022801">
    <property type="entry name" value="Ribosomal_uS4"/>
</dbReference>
<dbReference type="InterPro" id="IPR005709">
    <property type="entry name" value="Ribosomal_uS4_bac-type"/>
</dbReference>
<dbReference type="InterPro" id="IPR018079">
    <property type="entry name" value="Ribosomal_uS4_CS"/>
</dbReference>
<dbReference type="InterPro" id="IPR001912">
    <property type="entry name" value="Ribosomal_uS4_N"/>
</dbReference>
<dbReference type="InterPro" id="IPR002942">
    <property type="entry name" value="S4_RNA-bd"/>
</dbReference>
<dbReference type="InterPro" id="IPR036986">
    <property type="entry name" value="S4_RNA-bd_sf"/>
</dbReference>
<dbReference type="NCBIfam" id="NF003717">
    <property type="entry name" value="PRK05327.1"/>
    <property type="match status" value="1"/>
</dbReference>
<dbReference type="NCBIfam" id="TIGR01017">
    <property type="entry name" value="rpsD_bact"/>
    <property type="match status" value="1"/>
</dbReference>
<dbReference type="PANTHER" id="PTHR11831">
    <property type="entry name" value="30S 40S RIBOSOMAL PROTEIN"/>
    <property type="match status" value="1"/>
</dbReference>
<dbReference type="PANTHER" id="PTHR11831:SF4">
    <property type="entry name" value="SMALL RIBOSOMAL SUBUNIT PROTEIN US4M"/>
    <property type="match status" value="1"/>
</dbReference>
<dbReference type="Pfam" id="PF00163">
    <property type="entry name" value="Ribosomal_S4"/>
    <property type="match status" value="1"/>
</dbReference>
<dbReference type="Pfam" id="PF01479">
    <property type="entry name" value="S4"/>
    <property type="match status" value="1"/>
</dbReference>
<dbReference type="SMART" id="SM01390">
    <property type="entry name" value="Ribosomal_S4"/>
    <property type="match status" value="1"/>
</dbReference>
<dbReference type="SMART" id="SM00363">
    <property type="entry name" value="S4"/>
    <property type="match status" value="1"/>
</dbReference>
<dbReference type="SUPFAM" id="SSF55174">
    <property type="entry name" value="Alpha-L RNA-binding motif"/>
    <property type="match status" value="1"/>
</dbReference>
<dbReference type="PROSITE" id="PS00632">
    <property type="entry name" value="RIBOSOMAL_S4"/>
    <property type="match status" value="1"/>
</dbReference>
<dbReference type="PROSITE" id="PS50889">
    <property type="entry name" value="S4"/>
    <property type="match status" value="1"/>
</dbReference>
<gene>
    <name evidence="1" type="primary">rpsD</name>
    <name type="ordered locus">HD_1952</name>
</gene>
<accession>Q7VKF7</accession>
<feature type="chain" id="PRO_0000132390" description="Small ribosomal subunit protein uS4">
    <location>
        <begin position="1"/>
        <end position="208"/>
    </location>
</feature>
<feature type="domain" description="S4 RNA-binding" evidence="1">
    <location>
        <begin position="98"/>
        <end position="158"/>
    </location>
</feature>
<comment type="function">
    <text evidence="1">One of the primary rRNA binding proteins, it binds directly to 16S rRNA where it nucleates assembly of the body of the 30S subunit.</text>
</comment>
<comment type="function">
    <text evidence="1">With S5 and S12 plays an important role in translational accuracy.</text>
</comment>
<comment type="subunit">
    <text evidence="1">Part of the 30S ribosomal subunit. Contacts protein S5. The interaction surface between S4 and S5 is involved in control of translational fidelity.</text>
</comment>
<comment type="similarity">
    <text evidence="1">Belongs to the universal ribosomal protein uS4 family.</text>
</comment>